<reference key="1">
    <citation type="journal article" date="2009" name="J. Bacteriol.">
        <title>Complete genome sequence of Macrococcus caseolyticus strain JCSCS5402, reflecting the ancestral genome of the human-pathogenic staphylococci.</title>
        <authorList>
            <person name="Baba T."/>
            <person name="Kuwahara-Arai K."/>
            <person name="Uchiyama I."/>
            <person name="Takeuchi F."/>
            <person name="Ito T."/>
            <person name="Hiramatsu K."/>
        </authorList>
    </citation>
    <scope>NUCLEOTIDE SEQUENCE [LARGE SCALE GENOMIC DNA]</scope>
    <source>
        <strain>JCSC5402</strain>
    </source>
</reference>
<dbReference type="EC" id="6.1.1.4" evidence="1"/>
<dbReference type="EMBL" id="AP009484">
    <property type="protein sequence ID" value="BAH18142.1"/>
    <property type="molecule type" value="Genomic_DNA"/>
</dbReference>
<dbReference type="RefSeq" id="WP_012657340.1">
    <property type="nucleotide sequence ID" value="NC_011999.1"/>
</dbReference>
<dbReference type="SMR" id="B9E7H4"/>
<dbReference type="STRING" id="458233.MCCL_1435"/>
<dbReference type="KEGG" id="mcl:MCCL_1435"/>
<dbReference type="eggNOG" id="COG0495">
    <property type="taxonomic scope" value="Bacteria"/>
</dbReference>
<dbReference type="HOGENOM" id="CLU_004427_0_0_9"/>
<dbReference type="OrthoDB" id="9810365at2"/>
<dbReference type="Proteomes" id="UP000001383">
    <property type="component" value="Chromosome"/>
</dbReference>
<dbReference type="GO" id="GO:0005829">
    <property type="term" value="C:cytosol"/>
    <property type="evidence" value="ECO:0007669"/>
    <property type="project" value="TreeGrafter"/>
</dbReference>
<dbReference type="GO" id="GO:0002161">
    <property type="term" value="F:aminoacyl-tRNA deacylase activity"/>
    <property type="evidence" value="ECO:0007669"/>
    <property type="project" value="InterPro"/>
</dbReference>
<dbReference type="GO" id="GO:0005524">
    <property type="term" value="F:ATP binding"/>
    <property type="evidence" value="ECO:0007669"/>
    <property type="project" value="UniProtKB-UniRule"/>
</dbReference>
<dbReference type="GO" id="GO:0004823">
    <property type="term" value="F:leucine-tRNA ligase activity"/>
    <property type="evidence" value="ECO:0007669"/>
    <property type="project" value="UniProtKB-UniRule"/>
</dbReference>
<dbReference type="GO" id="GO:0006429">
    <property type="term" value="P:leucyl-tRNA aminoacylation"/>
    <property type="evidence" value="ECO:0007669"/>
    <property type="project" value="UniProtKB-UniRule"/>
</dbReference>
<dbReference type="CDD" id="cd07958">
    <property type="entry name" value="Anticodon_Ia_Leu_BEm"/>
    <property type="match status" value="1"/>
</dbReference>
<dbReference type="CDD" id="cd00812">
    <property type="entry name" value="LeuRS_core"/>
    <property type="match status" value="1"/>
</dbReference>
<dbReference type="FunFam" id="1.10.730.10:FF:000018">
    <property type="entry name" value="Leucine--tRNA ligase"/>
    <property type="match status" value="1"/>
</dbReference>
<dbReference type="FunFam" id="3.10.20.590:FF:000001">
    <property type="entry name" value="Leucine--tRNA ligase"/>
    <property type="match status" value="1"/>
</dbReference>
<dbReference type="FunFam" id="3.40.50.620:FF:000056">
    <property type="entry name" value="Leucine--tRNA ligase"/>
    <property type="match status" value="1"/>
</dbReference>
<dbReference type="FunFam" id="3.40.50.620:FF:000077">
    <property type="entry name" value="Leucine--tRNA ligase"/>
    <property type="match status" value="1"/>
</dbReference>
<dbReference type="Gene3D" id="3.10.20.590">
    <property type="match status" value="1"/>
</dbReference>
<dbReference type="Gene3D" id="3.40.50.620">
    <property type="entry name" value="HUPs"/>
    <property type="match status" value="2"/>
</dbReference>
<dbReference type="Gene3D" id="1.10.730.10">
    <property type="entry name" value="Isoleucyl-tRNA Synthetase, Domain 1"/>
    <property type="match status" value="1"/>
</dbReference>
<dbReference type="HAMAP" id="MF_00049_B">
    <property type="entry name" value="Leu_tRNA_synth_B"/>
    <property type="match status" value="1"/>
</dbReference>
<dbReference type="InterPro" id="IPR001412">
    <property type="entry name" value="aa-tRNA-synth_I_CS"/>
</dbReference>
<dbReference type="InterPro" id="IPR002300">
    <property type="entry name" value="aa-tRNA-synth_Ia"/>
</dbReference>
<dbReference type="InterPro" id="IPR002302">
    <property type="entry name" value="Leu-tRNA-ligase"/>
</dbReference>
<dbReference type="InterPro" id="IPR025709">
    <property type="entry name" value="Leu_tRNA-synth_edit"/>
</dbReference>
<dbReference type="InterPro" id="IPR013155">
    <property type="entry name" value="M/V/L/I-tRNA-synth_anticd-bd"/>
</dbReference>
<dbReference type="InterPro" id="IPR015413">
    <property type="entry name" value="Methionyl/Leucyl_tRNA_Synth"/>
</dbReference>
<dbReference type="InterPro" id="IPR014729">
    <property type="entry name" value="Rossmann-like_a/b/a_fold"/>
</dbReference>
<dbReference type="InterPro" id="IPR009080">
    <property type="entry name" value="tRNAsynth_Ia_anticodon-bd"/>
</dbReference>
<dbReference type="InterPro" id="IPR009008">
    <property type="entry name" value="Val/Leu/Ile-tRNA-synth_edit"/>
</dbReference>
<dbReference type="NCBIfam" id="TIGR00396">
    <property type="entry name" value="leuS_bact"/>
    <property type="match status" value="1"/>
</dbReference>
<dbReference type="PANTHER" id="PTHR43740:SF2">
    <property type="entry name" value="LEUCINE--TRNA LIGASE, MITOCHONDRIAL"/>
    <property type="match status" value="1"/>
</dbReference>
<dbReference type="PANTHER" id="PTHR43740">
    <property type="entry name" value="LEUCYL-TRNA SYNTHETASE"/>
    <property type="match status" value="1"/>
</dbReference>
<dbReference type="Pfam" id="PF08264">
    <property type="entry name" value="Anticodon_1"/>
    <property type="match status" value="1"/>
</dbReference>
<dbReference type="Pfam" id="PF00133">
    <property type="entry name" value="tRNA-synt_1"/>
    <property type="match status" value="1"/>
</dbReference>
<dbReference type="Pfam" id="PF13603">
    <property type="entry name" value="tRNA-synt_1_2"/>
    <property type="match status" value="1"/>
</dbReference>
<dbReference type="Pfam" id="PF09334">
    <property type="entry name" value="tRNA-synt_1g"/>
    <property type="match status" value="1"/>
</dbReference>
<dbReference type="PRINTS" id="PR00985">
    <property type="entry name" value="TRNASYNTHLEU"/>
</dbReference>
<dbReference type="SUPFAM" id="SSF47323">
    <property type="entry name" value="Anticodon-binding domain of a subclass of class I aminoacyl-tRNA synthetases"/>
    <property type="match status" value="1"/>
</dbReference>
<dbReference type="SUPFAM" id="SSF52374">
    <property type="entry name" value="Nucleotidylyl transferase"/>
    <property type="match status" value="1"/>
</dbReference>
<dbReference type="SUPFAM" id="SSF50677">
    <property type="entry name" value="ValRS/IleRS/LeuRS editing domain"/>
    <property type="match status" value="1"/>
</dbReference>
<dbReference type="PROSITE" id="PS00178">
    <property type="entry name" value="AA_TRNA_LIGASE_I"/>
    <property type="match status" value="1"/>
</dbReference>
<proteinExistence type="inferred from homology"/>
<name>SYL_MACCJ</name>
<organism>
    <name type="scientific">Macrococcus caseolyticus (strain JCSC5402)</name>
    <name type="common">Macrococcoides caseolyticum</name>
    <dbReference type="NCBI Taxonomy" id="458233"/>
    <lineage>
        <taxon>Bacteria</taxon>
        <taxon>Bacillati</taxon>
        <taxon>Bacillota</taxon>
        <taxon>Bacilli</taxon>
        <taxon>Bacillales</taxon>
        <taxon>Staphylococcaceae</taxon>
        <taxon>Macrococcoides</taxon>
    </lineage>
</organism>
<protein>
    <recommendedName>
        <fullName evidence="1">Leucine--tRNA ligase</fullName>
        <ecNumber evidence="1">6.1.1.4</ecNumber>
    </recommendedName>
    <alternativeName>
        <fullName evidence="1">Leucyl-tRNA synthetase</fullName>
        <shortName evidence="1">LeuRS</shortName>
    </alternativeName>
</protein>
<keyword id="KW-0030">Aminoacyl-tRNA synthetase</keyword>
<keyword id="KW-0067">ATP-binding</keyword>
<keyword id="KW-0963">Cytoplasm</keyword>
<keyword id="KW-0436">Ligase</keyword>
<keyword id="KW-0547">Nucleotide-binding</keyword>
<keyword id="KW-0648">Protein biosynthesis</keyword>
<keyword id="KW-1185">Reference proteome</keyword>
<sequence>MSFNHQTIEKKWQKYWLDNHTFKTTEDKDKNFYALDMFPYPSGAGLHVGHPEGYTATDIISRFKRMQGYNVLHPMGWDAFGLPAEQYAIDTGNDPAEFTEKNIATFKRQIQELGFSYDWEREINTTDPEYYKWTQWIFIQLYKKGLAYVDEVAVNWCPALGTVLSNEEVIDGVSERGGHPVIRKPMRQWVLKITEYADRLLEDLEELDWPESLKDMQRNWIGRSEGAEVAFEVENLDHSFKVFTTRPDTIYGATYAVLSPEHELVAAITSEEQAEAVKAYQEQAARKSDLERTDLAKDKTGVFTGSYAINPFNGERMPIWISDYVLASYGTGAIMAVPAHDERDFEFAKQFGLDIKPVIEGGDNTSAYTGDGAHINSGELDGLNKEEGIRRAIELLEAKGIGEKKVSYKLRDWLFSRQRYWGEPIPVITWEDGSMTTVPEEELPLMLPKTEHIKPSGTGESPLANIDEFVNVTDPVTGMKGRRETNTMPQWAGSCWYYLRYIDPKNSDMIADPELLKKWLPVDLYIGGAEHAVLHLLYARFWHKVLYDLGVVHTKEPFQKLFNQGMILGEGNEKMSKSKGNVVNPDDVVASHGADTLRLYEMFMGPLDASIAWSTNGLDGARRFLDRVYRLLVNEDGTLSEKITEQPVGSMEKVYHQTVKKVTDDYETLGFNTAISQMMVFINEGYKSEQLNIDHIRGFVKLLNPIAPHITEELWEKLGGTESITYEAWPVYDESKLVDSEVEIVIQVNGKLKQKATIAKDMDKSEMETFALSLEAVQTAIEGKTVRKVIAVPNKLVNIVAN</sequence>
<gene>
    <name evidence="1" type="primary">leuS</name>
    <name type="ordered locus">MCCL_1435</name>
</gene>
<accession>B9E7H4</accession>
<evidence type="ECO:0000255" key="1">
    <source>
        <dbReference type="HAMAP-Rule" id="MF_00049"/>
    </source>
</evidence>
<comment type="catalytic activity">
    <reaction evidence="1">
        <text>tRNA(Leu) + L-leucine + ATP = L-leucyl-tRNA(Leu) + AMP + diphosphate</text>
        <dbReference type="Rhea" id="RHEA:11688"/>
        <dbReference type="Rhea" id="RHEA-COMP:9613"/>
        <dbReference type="Rhea" id="RHEA-COMP:9622"/>
        <dbReference type="ChEBI" id="CHEBI:30616"/>
        <dbReference type="ChEBI" id="CHEBI:33019"/>
        <dbReference type="ChEBI" id="CHEBI:57427"/>
        <dbReference type="ChEBI" id="CHEBI:78442"/>
        <dbReference type="ChEBI" id="CHEBI:78494"/>
        <dbReference type="ChEBI" id="CHEBI:456215"/>
        <dbReference type="EC" id="6.1.1.4"/>
    </reaction>
</comment>
<comment type="subcellular location">
    <subcellularLocation>
        <location evidence="1">Cytoplasm</location>
    </subcellularLocation>
</comment>
<comment type="similarity">
    <text evidence="1">Belongs to the class-I aminoacyl-tRNA synthetase family.</text>
</comment>
<feature type="chain" id="PRO_1000199213" description="Leucine--tRNA ligase">
    <location>
        <begin position="1"/>
        <end position="802"/>
    </location>
</feature>
<feature type="short sequence motif" description="'HIGH' region">
    <location>
        <begin position="39"/>
        <end position="50"/>
    </location>
</feature>
<feature type="short sequence motif" description="'KMSKS' region">
    <location>
        <begin position="574"/>
        <end position="578"/>
    </location>
</feature>
<feature type="binding site" evidence="1">
    <location>
        <position position="577"/>
    </location>
    <ligand>
        <name>ATP</name>
        <dbReference type="ChEBI" id="CHEBI:30616"/>
    </ligand>
</feature>